<name>PRTS_SERMA</name>
<accession>P09489</accession>
<sequence>MILNKRLKLAYCVFLGCYGLSIHSSLAAYQDPGRLGAPDSWKTAEFNRQWGLEAISAEFAYARGYTGKGITIGVIDNAILSHSEFSGKLTRLDNGSYNFSYDKQDNMSFGDHGTHVAGIAAAKRDGAGMHGVAFDADIIGTKLNDYGNRNGREELIQSAARVINNSWGIAPDIRRDAKGDIIWLPNGRPDYVAFVKSEVIAEMMRSKSSVEWGSEQPVPTGGHSAMSTLLRAARHGKLIVFSAGNYNNYNIPEAQKSLPYAFPDVLNNYLIVTNLSDENQLSVSSTSCGQTASYCVSAPGSDIYSTVGRLESNTGGAVNREAYNKGELSLNPGYGNKSGTSMAAPHVTGVAAVLMQRFPYMSADQISAVIKTTATDLGVAGIDNLFGWGRVNLRDAINGPKMFITKEDIPQEYYVPGSYSEKQFVVNIPGLGNIVEPGTPVERRCTSSECSFDSWSNDISGHGGLTKTGAGTLALLGNNTYRGDTWVKQGVLAIDGSVASNVYIENSGTLSGEGTVGAFRAARSGSVAPGNGIGTLHVLHDAIFDRGSQYNVEVADNGRSDKIAARRAFLNGGSVNVSLERSQNLLSQNEAQSLLGNKYTILTTTDGVTGRFENANPSYPFVKVALDYRGNDVGLGITRTDASFDSLASTENEKAVARAVETLNATEPVTETAKRSVAIPAAEEANLLQSDGGEAQAVNEEASIVAGHPIYESFLGFTSARELQQATRQLSGQIHADMASAQINESRYLRDTATERLRQAEGRRTATDIKADDNGAWAKLLGSWGHASGNDNATGYQTSTYGVLLGLDSELFGDGRLGMMTGYTRTSLDGGYQSDAHSDNYHLGLYGDKRFGALALRAGGTYTWHRIDTSRSVNYGAQSDREKAKYNARTGQLFIESGYDWTSDAVNLEPFANLAYTHYRNEEINEQGGAAALRGDKQSQSATASTLGLRADTEWQTDSVAIALRGELGWQHQYGKLERKTQLMFKRTDAAFDVNSVPVSRDGAILKAGVDVSINKNAVLSLGYGGQLSSNHQDNSVNAGLTWRF</sequence>
<dbReference type="EC" id="3.4.21.-"/>
<dbReference type="EMBL" id="M13469">
    <property type="protein sequence ID" value="AAA26572.1"/>
    <property type="molecule type" value="Genomic_DNA"/>
</dbReference>
<dbReference type="PIR" id="A29840">
    <property type="entry name" value="A29840"/>
</dbReference>
<dbReference type="PDB" id="8E7F">
    <property type="method" value="X-ray"/>
    <property type="resolution" value="2.00 A"/>
    <property type="chains" value="A=28-645"/>
</dbReference>
<dbReference type="PDBsum" id="8E7F"/>
<dbReference type="SMR" id="P09489"/>
<dbReference type="STRING" id="273526.SMDB11_1670"/>
<dbReference type="MEROPS" id="S08.094"/>
<dbReference type="TCDB" id="1.B.12.5.1">
    <property type="family name" value="the autotransporter-1 (at-1) family"/>
</dbReference>
<dbReference type="GO" id="GO:0005576">
    <property type="term" value="C:extracellular region"/>
    <property type="evidence" value="ECO:0007669"/>
    <property type="project" value="UniProtKB-SubCell"/>
</dbReference>
<dbReference type="GO" id="GO:0019867">
    <property type="term" value="C:outer membrane"/>
    <property type="evidence" value="ECO:0007669"/>
    <property type="project" value="InterPro"/>
</dbReference>
<dbReference type="GO" id="GO:0004252">
    <property type="term" value="F:serine-type endopeptidase activity"/>
    <property type="evidence" value="ECO:0007669"/>
    <property type="project" value="InterPro"/>
</dbReference>
<dbReference type="GO" id="GO:0006508">
    <property type="term" value="P:proteolysis"/>
    <property type="evidence" value="ECO:0007669"/>
    <property type="project" value="UniProtKB-KW"/>
</dbReference>
<dbReference type="CDD" id="cd04848">
    <property type="entry name" value="Peptidases_S8_Autotransporter_serine_protease_like"/>
    <property type="match status" value="1"/>
</dbReference>
<dbReference type="Gene3D" id="2.40.128.130">
    <property type="entry name" value="Autotransporter beta-domain"/>
    <property type="match status" value="1"/>
</dbReference>
<dbReference type="Gene3D" id="3.40.50.200">
    <property type="entry name" value="Peptidase S8/S53 domain"/>
    <property type="match status" value="1"/>
</dbReference>
<dbReference type="InterPro" id="IPR005546">
    <property type="entry name" value="Autotransporte_beta"/>
</dbReference>
<dbReference type="InterPro" id="IPR036709">
    <property type="entry name" value="Autotransporte_beta_dom_sf"/>
</dbReference>
<dbReference type="InterPro" id="IPR013425">
    <property type="entry name" value="Autotrns_rpt"/>
</dbReference>
<dbReference type="InterPro" id="IPR006315">
    <property type="entry name" value="OM_autotransptr_brl_dom"/>
</dbReference>
<dbReference type="InterPro" id="IPR011050">
    <property type="entry name" value="Pectin_lyase_fold/virulence"/>
</dbReference>
<dbReference type="InterPro" id="IPR000209">
    <property type="entry name" value="Peptidase_S8/S53_dom"/>
</dbReference>
<dbReference type="InterPro" id="IPR036852">
    <property type="entry name" value="Peptidase_S8/S53_dom_sf"/>
</dbReference>
<dbReference type="InterPro" id="IPR022398">
    <property type="entry name" value="Peptidase_S8_His-AS"/>
</dbReference>
<dbReference type="InterPro" id="IPR023828">
    <property type="entry name" value="Peptidase_S8_Ser-AS"/>
</dbReference>
<dbReference type="InterPro" id="IPR050131">
    <property type="entry name" value="Peptidase_S8_subtilisin-like"/>
</dbReference>
<dbReference type="InterPro" id="IPR015500">
    <property type="entry name" value="Peptidase_S8_subtilisin-rel"/>
</dbReference>
<dbReference type="InterPro" id="IPR034061">
    <property type="entry name" value="Peptidases_S8_Autotransporter"/>
</dbReference>
<dbReference type="NCBIfam" id="TIGR01414">
    <property type="entry name" value="autotrans_barl"/>
    <property type="match status" value="1"/>
</dbReference>
<dbReference type="NCBIfam" id="TIGR02601">
    <property type="entry name" value="autotrns_rpt"/>
    <property type="match status" value="1"/>
</dbReference>
<dbReference type="PANTHER" id="PTHR43806:SF11">
    <property type="entry name" value="CEREVISIN-RELATED"/>
    <property type="match status" value="1"/>
</dbReference>
<dbReference type="PANTHER" id="PTHR43806">
    <property type="entry name" value="PEPTIDASE S8"/>
    <property type="match status" value="1"/>
</dbReference>
<dbReference type="Pfam" id="PF03797">
    <property type="entry name" value="Autotransporter"/>
    <property type="match status" value="1"/>
</dbReference>
<dbReference type="Pfam" id="PF12951">
    <property type="entry name" value="PATR"/>
    <property type="match status" value="1"/>
</dbReference>
<dbReference type="Pfam" id="PF00082">
    <property type="entry name" value="Peptidase_S8"/>
    <property type="match status" value="1"/>
</dbReference>
<dbReference type="PRINTS" id="PR00723">
    <property type="entry name" value="SUBTILISIN"/>
</dbReference>
<dbReference type="SMART" id="SM00869">
    <property type="entry name" value="Autotransporter"/>
    <property type="match status" value="1"/>
</dbReference>
<dbReference type="SUPFAM" id="SSF103515">
    <property type="entry name" value="Autotransporter"/>
    <property type="match status" value="1"/>
</dbReference>
<dbReference type="SUPFAM" id="SSF51126">
    <property type="entry name" value="Pectin lyase-like"/>
    <property type="match status" value="1"/>
</dbReference>
<dbReference type="SUPFAM" id="SSF52743">
    <property type="entry name" value="Subtilisin-like"/>
    <property type="match status" value="1"/>
</dbReference>
<dbReference type="PROSITE" id="PS51208">
    <property type="entry name" value="AUTOTRANSPORTER"/>
    <property type="match status" value="1"/>
</dbReference>
<dbReference type="PROSITE" id="PS51892">
    <property type="entry name" value="SUBTILASE"/>
    <property type="match status" value="1"/>
</dbReference>
<dbReference type="PROSITE" id="PS00137">
    <property type="entry name" value="SUBTILASE_HIS"/>
    <property type="match status" value="1"/>
</dbReference>
<dbReference type="PROSITE" id="PS00138">
    <property type="entry name" value="SUBTILASE_SER"/>
    <property type="match status" value="1"/>
</dbReference>
<keyword id="KW-0002">3D-structure</keyword>
<keyword id="KW-0903">Direct protein sequencing</keyword>
<keyword id="KW-0378">Hydrolase</keyword>
<keyword id="KW-0645">Protease</keyword>
<keyword id="KW-0964">Secreted</keyword>
<keyword id="KW-0720">Serine protease</keyword>
<keyword id="KW-0732">Signal</keyword>
<keyword id="KW-0865">Zymogen</keyword>
<evidence type="ECO:0000255" key="1">
    <source>
        <dbReference type="PROSITE-ProRule" id="PRU00556"/>
    </source>
</evidence>
<evidence type="ECO:0000255" key="2">
    <source>
        <dbReference type="PROSITE-ProRule" id="PRU01240"/>
    </source>
</evidence>
<evidence type="ECO:0000269" key="3">
    <source>
    </source>
</evidence>
<evidence type="ECO:0000305" key="4"/>
<evidence type="ECO:0007829" key="5">
    <source>
        <dbReference type="PDB" id="8E7F"/>
    </source>
</evidence>
<organism>
    <name type="scientific">Serratia marcescens</name>
    <dbReference type="NCBI Taxonomy" id="615"/>
    <lineage>
        <taxon>Bacteria</taxon>
        <taxon>Pseudomonadati</taxon>
        <taxon>Pseudomonadota</taxon>
        <taxon>Gammaproteobacteria</taxon>
        <taxon>Enterobacterales</taxon>
        <taxon>Yersiniaceae</taxon>
        <taxon>Serratia</taxon>
    </lineage>
</organism>
<feature type="signal peptide" evidence="3">
    <location>
        <begin position="1"/>
        <end position="27"/>
    </location>
</feature>
<feature type="chain" id="PRO_0000027144" description="Extracellular serine protease">
    <location>
        <begin position="28"/>
        <end position="645"/>
    </location>
</feature>
<feature type="propeptide" id="PRO_0000027145" description="Translocator domain; removed in mature form">
    <location>
        <begin position="646"/>
        <end position="1045"/>
    </location>
</feature>
<feature type="domain" description="Peptidase S8" evidence="2">
    <location>
        <begin position="49"/>
        <end position="397"/>
    </location>
</feature>
<feature type="domain" description="Autotransporter" evidence="1">
    <location>
        <begin position="769"/>
        <end position="1045"/>
    </location>
</feature>
<feature type="active site" description="Charge relay system" evidence="2">
    <location>
        <position position="76"/>
    </location>
</feature>
<feature type="active site" description="Charge relay system" evidence="2">
    <location>
        <position position="112"/>
    </location>
</feature>
<feature type="active site" description="Charge relay system" evidence="2">
    <location>
        <position position="341"/>
    </location>
</feature>
<feature type="helix" evidence="5">
    <location>
        <begin position="38"/>
        <end position="41"/>
    </location>
</feature>
<feature type="helix" evidence="5">
    <location>
        <begin position="44"/>
        <end position="47"/>
    </location>
</feature>
<feature type="helix" evidence="5">
    <location>
        <begin position="51"/>
        <end position="54"/>
    </location>
</feature>
<feature type="helix" evidence="5">
    <location>
        <begin position="57"/>
        <end position="62"/>
    </location>
</feature>
<feature type="strand" evidence="5">
    <location>
        <begin position="71"/>
        <end position="77"/>
    </location>
</feature>
<feature type="helix" evidence="5">
    <location>
        <begin position="83"/>
        <end position="85"/>
    </location>
</feature>
<feature type="turn" evidence="5">
    <location>
        <begin position="86"/>
        <end position="88"/>
    </location>
</feature>
<feature type="strand" evidence="5">
    <location>
        <begin position="89"/>
        <end position="91"/>
    </location>
</feature>
<feature type="strand" evidence="5">
    <location>
        <begin position="93"/>
        <end position="95"/>
    </location>
</feature>
<feature type="strand" evidence="5">
    <location>
        <begin position="99"/>
        <end position="101"/>
    </location>
</feature>
<feature type="strand" evidence="5">
    <location>
        <begin position="106"/>
        <end position="109"/>
    </location>
</feature>
<feature type="helix" evidence="5">
    <location>
        <begin position="112"/>
        <end position="121"/>
    </location>
</feature>
<feature type="strand" evidence="5">
    <location>
        <begin position="125"/>
        <end position="128"/>
    </location>
</feature>
<feature type="turn" evidence="5">
    <location>
        <begin position="132"/>
        <end position="135"/>
    </location>
</feature>
<feature type="strand" evidence="5">
    <location>
        <begin position="137"/>
        <end position="144"/>
    </location>
</feature>
<feature type="helix" evidence="5">
    <location>
        <begin position="152"/>
        <end position="157"/>
    </location>
</feature>
<feature type="strand" evidence="5">
    <location>
        <begin position="158"/>
        <end position="165"/>
    </location>
</feature>
<feature type="strand" evidence="5">
    <location>
        <begin position="187"/>
        <end position="189"/>
    </location>
</feature>
<feature type="helix" evidence="5">
    <location>
        <begin position="196"/>
        <end position="215"/>
    </location>
</feature>
<feature type="strand" evidence="5">
    <location>
        <begin position="220"/>
        <end position="222"/>
    </location>
</feature>
<feature type="helix" evidence="5">
    <location>
        <begin position="225"/>
        <end position="234"/>
    </location>
</feature>
<feature type="strand" evidence="5">
    <location>
        <begin position="238"/>
        <end position="242"/>
    </location>
</feature>
<feature type="helix" evidence="5">
    <location>
        <begin position="254"/>
        <end position="260"/>
    </location>
</feature>
<feature type="helix" evidence="5">
    <location>
        <begin position="263"/>
        <end position="268"/>
    </location>
</feature>
<feature type="strand" evidence="5">
    <location>
        <begin position="269"/>
        <end position="277"/>
    </location>
</feature>
<feature type="helix" evidence="5">
    <location>
        <begin position="289"/>
        <end position="294"/>
    </location>
</feature>
<feature type="strand" evidence="5">
    <location>
        <begin position="295"/>
        <end position="299"/>
    </location>
</feature>
<feature type="strand" evidence="5">
    <location>
        <begin position="301"/>
        <end position="312"/>
    </location>
</feature>
<feature type="helix" evidence="5">
    <location>
        <begin position="320"/>
        <end position="324"/>
    </location>
</feature>
<feature type="strand" evidence="5">
    <location>
        <begin position="328"/>
        <end position="337"/>
    </location>
</feature>
<feature type="helix" evidence="5">
    <location>
        <begin position="340"/>
        <end position="357"/>
    </location>
</feature>
<feature type="helix" evidence="5">
    <location>
        <begin position="363"/>
        <end position="373"/>
    </location>
</feature>
<feature type="strand" evidence="5">
    <location>
        <begin position="378"/>
        <end position="383"/>
    </location>
</feature>
<feature type="turn" evidence="5">
    <location>
        <begin position="384"/>
        <end position="386"/>
    </location>
</feature>
<feature type="helix" evidence="5">
    <location>
        <begin position="393"/>
        <end position="396"/>
    </location>
</feature>
<feature type="helix" evidence="5">
    <location>
        <begin position="406"/>
        <end position="408"/>
    </location>
</feature>
<feature type="helix" evidence="5">
    <location>
        <begin position="411"/>
        <end position="413"/>
    </location>
</feature>
<feature type="strand" evidence="5">
    <location>
        <begin position="423"/>
        <end position="427"/>
    </location>
</feature>
<feature type="strand" evidence="5">
    <location>
        <begin position="434"/>
        <end position="436"/>
    </location>
</feature>
<feature type="helix" evidence="5">
    <location>
        <begin position="448"/>
        <end position="450"/>
    </location>
</feature>
<feature type="strand" evidence="5">
    <location>
        <begin position="452"/>
        <end position="455"/>
    </location>
</feature>
<feature type="strand" evidence="5">
    <location>
        <begin position="460"/>
        <end position="462"/>
    </location>
</feature>
<feature type="strand" evidence="5">
    <location>
        <begin position="464"/>
        <end position="475"/>
    </location>
</feature>
<feature type="strand" evidence="5">
    <location>
        <begin position="477"/>
        <end position="479"/>
    </location>
</feature>
<feature type="strand" evidence="5">
    <location>
        <begin position="485"/>
        <end position="487"/>
    </location>
</feature>
<feature type="strand" evidence="5">
    <location>
        <begin position="489"/>
        <end position="498"/>
    </location>
</feature>
<feature type="strand" evidence="5">
    <location>
        <begin position="500"/>
        <end position="504"/>
    </location>
</feature>
<feature type="strand" evidence="5">
    <location>
        <begin position="508"/>
        <end position="521"/>
    </location>
</feature>
<feature type="strand" evidence="5">
    <location>
        <begin position="526"/>
        <end position="533"/>
    </location>
</feature>
<feature type="strand" evidence="5">
    <location>
        <begin position="535"/>
        <end position="544"/>
    </location>
</feature>
<feature type="strand" evidence="5">
    <location>
        <begin position="549"/>
        <end position="554"/>
    </location>
</feature>
<feature type="strand" evidence="5">
    <location>
        <begin position="562"/>
        <end position="571"/>
    </location>
</feature>
<feature type="strand" evidence="5">
    <location>
        <begin position="574"/>
        <end position="579"/>
    </location>
</feature>
<feature type="helix" evidence="5">
    <location>
        <begin position="588"/>
        <end position="593"/>
    </location>
</feature>
<feature type="turn" evidence="5">
    <location>
        <begin position="594"/>
        <end position="596"/>
    </location>
</feature>
<feature type="strand" evidence="5">
    <location>
        <begin position="598"/>
        <end position="603"/>
    </location>
</feature>
<feature type="strand" evidence="5">
    <location>
        <begin position="608"/>
        <end position="610"/>
    </location>
</feature>
<feature type="strand" evidence="5">
    <location>
        <begin position="613"/>
        <end position="616"/>
    </location>
</feature>
<feature type="strand" evidence="5">
    <location>
        <begin position="623"/>
        <end position="628"/>
    </location>
</feature>
<feature type="strand" evidence="5">
    <location>
        <begin position="630"/>
        <end position="638"/>
    </location>
</feature>
<comment type="subcellular location">
    <subcellularLocation>
        <location>Secreted</location>
    </subcellularLocation>
</comment>
<comment type="similarity">
    <text evidence="4">Belongs to the peptidase S8 family.</text>
</comment>
<proteinExistence type="evidence at protein level"/>
<reference key="1">
    <citation type="journal article" date="1986" name="J. Bacteriol.">
        <title>Specific excretion of Serratia marcescens protease through the outer membrane of Escherichia coli.</title>
        <authorList>
            <person name="Yanagida N."/>
            <person name="Uozumi T."/>
            <person name="Beppu T."/>
        </authorList>
    </citation>
    <scope>NUCLEOTIDE SEQUENCE [GENOMIC DNA]</scope>
    <scope>PROTEIN SEQUENCE OF 28-35 AND 407-408</scope>
    <source>
        <strain>NBRC 3046</strain>
    </source>
</reference>
<reference key="2">
    <citation type="journal article" date="1992" name="J. Biochem.">
        <title>Detection of large COOH-terminal domains processed from the precursor of Serratia marcescens serine protease in the outer membrane of Escherichia coli.</title>
        <authorList>
            <person name="Shikata S."/>
            <person name="Shimada K."/>
            <person name="Kataoka H."/>
            <person name="Hornouchi S."/>
            <person name="Beppu T."/>
        </authorList>
    </citation>
    <scope>PARTIAL PROTEIN SEQUENCE</scope>
    <scope>PROTEOLYTIC PROCESSING</scope>
</reference>
<protein>
    <recommendedName>
        <fullName>Extracellular serine protease</fullName>
        <ecNumber>3.4.21.-</ecNumber>
    </recommendedName>
</protein>